<protein>
    <recommendedName>
        <fullName evidence="1">NAD(P)H-quinone oxidoreductase subunit K 1</fullName>
        <ecNumber evidence="1">7.1.1.-</ecNumber>
    </recommendedName>
    <alternativeName>
        <fullName evidence="1">NAD(P)H dehydrogenase I subunit K 1</fullName>
    </alternativeName>
    <alternativeName>
        <fullName evidence="1">NDH-1 subunit K 1</fullName>
        <shortName evidence="1">NDH-K 1</shortName>
    </alternativeName>
</protein>
<dbReference type="EC" id="7.1.1.-" evidence="1"/>
<dbReference type="EMBL" id="CP000828">
    <property type="protein sequence ID" value="ABW26402.1"/>
    <property type="molecule type" value="Genomic_DNA"/>
</dbReference>
<dbReference type="RefSeq" id="WP_010476380.1">
    <property type="nucleotide sequence ID" value="NC_009925.1"/>
</dbReference>
<dbReference type="SMR" id="B0C6I1"/>
<dbReference type="STRING" id="329726.AM1_1371"/>
<dbReference type="KEGG" id="amr:AM1_1371"/>
<dbReference type="eggNOG" id="COG0377">
    <property type="taxonomic scope" value="Bacteria"/>
</dbReference>
<dbReference type="HOGENOM" id="CLU_055737_2_1_3"/>
<dbReference type="OrthoDB" id="9786737at2"/>
<dbReference type="Proteomes" id="UP000000268">
    <property type="component" value="Chromosome"/>
</dbReference>
<dbReference type="GO" id="GO:0031676">
    <property type="term" value="C:plasma membrane-derived thylakoid membrane"/>
    <property type="evidence" value="ECO:0007669"/>
    <property type="project" value="UniProtKB-SubCell"/>
</dbReference>
<dbReference type="GO" id="GO:0045271">
    <property type="term" value="C:respiratory chain complex I"/>
    <property type="evidence" value="ECO:0007669"/>
    <property type="project" value="TreeGrafter"/>
</dbReference>
<dbReference type="GO" id="GO:0051539">
    <property type="term" value="F:4 iron, 4 sulfur cluster binding"/>
    <property type="evidence" value="ECO:0007669"/>
    <property type="project" value="UniProtKB-KW"/>
</dbReference>
<dbReference type="GO" id="GO:0005506">
    <property type="term" value="F:iron ion binding"/>
    <property type="evidence" value="ECO:0007669"/>
    <property type="project" value="UniProtKB-UniRule"/>
</dbReference>
<dbReference type="GO" id="GO:0008137">
    <property type="term" value="F:NADH dehydrogenase (ubiquinone) activity"/>
    <property type="evidence" value="ECO:0007669"/>
    <property type="project" value="InterPro"/>
</dbReference>
<dbReference type="GO" id="GO:0048038">
    <property type="term" value="F:quinone binding"/>
    <property type="evidence" value="ECO:0007669"/>
    <property type="project" value="UniProtKB-KW"/>
</dbReference>
<dbReference type="GO" id="GO:0009060">
    <property type="term" value="P:aerobic respiration"/>
    <property type="evidence" value="ECO:0007669"/>
    <property type="project" value="TreeGrafter"/>
</dbReference>
<dbReference type="GO" id="GO:0015990">
    <property type="term" value="P:electron transport coupled proton transport"/>
    <property type="evidence" value="ECO:0007669"/>
    <property type="project" value="TreeGrafter"/>
</dbReference>
<dbReference type="GO" id="GO:0019684">
    <property type="term" value="P:photosynthesis, light reaction"/>
    <property type="evidence" value="ECO:0007669"/>
    <property type="project" value="UniProtKB-UniRule"/>
</dbReference>
<dbReference type="FunFam" id="3.40.50.12280:FF:000003">
    <property type="entry name" value="NAD(P)H-quinone oxidoreductase subunit K, chloroplastic"/>
    <property type="match status" value="1"/>
</dbReference>
<dbReference type="Gene3D" id="3.40.50.12280">
    <property type="match status" value="1"/>
</dbReference>
<dbReference type="HAMAP" id="MF_01356">
    <property type="entry name" value="NDH1_NuoB"/>
    <property type="match status" value="1"/>
</dbReference>
<dbReference type="InterPro" id="IPR006137">
    <property type="entry name" value="NADH_UbQ_OxRdtase-like_20kDa"/>
</dbReference>
<dbReference type="InterPro" id="IPR006138">
    <property type="entry name" value="NADH_UQ_OxRdtase_20Kd_su"/>
</dbReference>
<dbReference type="NCBIfam" id="TIGR01957">
    <property type="entry name" value="nuoB_fam"/>
    <property type="match status" value="1"/>
</dbReference>
<dbReference type="NCBIfam" id="NF005012">
    <property type="entry name" value="PRK06411.1"/>
    <property type="match status" value="1"/>
</dbReference>
<dbReference type="PANTHER" id="PTHR11995">
    <property type="entry name" value="NADH DEHYDROGENASE"/>
    <property type="match status" value="1"/>
</dbReference>
<dbReference type="PANTHER" id="PTHR11995:SF14">
    <property type="entry name" value="NADH DEHYDROGENASE [UBIQUINONE] IRON-SULFUR PROTEIN 7, MITOCHONDRIAL"/>
    <property type="match status" value="1"/>
</dbReference>
<dbReference type="Pfam" id="PF01058">
    <property type="entry name" value="Oxidored_q6"/>
    <property type="match status" value="1"/>
</dbReference>
<dbReference type="SUPFAM" id="SSF56770">
    <property type="entry name" value="HydA/Nqo6-like"/>
    <property type="match status" value="1"/>
</dbReference>
<dbReference type="PROSITE" id="PS01150">
    <property type="entry name" value="COMPLEX1_20K"/>
    <property type="match status" value="1"/>
</dbReference>
<keyword id="KW-0004">4Fe-4S</keyword>
<keyword id="KW-0408">Iron</keyword>
<keyword id="KW-0411">Iron-sulfur</keyword>
<keyword id="KW-0472">Membrane</keyword>
<keyword id="KW-0479">Metal-binding</keyword>
<keyword id="KW-0520">NAD</keyword>
<keyword id="KW-0521">NADP</keyword>
<keyword id="KW-0618">Plastoquinone</keyword>
<keyword id="KW-0874">Quinone</keyword>
<keyword id="KW-1185">Reference proteome</keyword>
<keyword id="KW-0793">Thylakoid</keyword>
<keyword id="KW-1278">Translocase</keyword>
<keyword id="KW-0813">Transport</keyword>
<feature type="chain" id="PRO_0000358334" description="NAD(P)H-quinone oxidoreductase subunit K 1">
    <location>
        <begin position="1"/>
        <end position="232"/>
    </location>
</feature>
<feature type="binding site" evidence="1">
    <location>
        <position position="49"/>
    </location>
    <ligand>
        <name>[4Fe-4S] cluster</name>
        <dbReference type="ChEBI" id="CHEBI:49883"/>
    </ligand>
</feature>
<feature type="binding site" evidence="1">
    <location>
        <position position="50"/>
    </location>
    <ligand>
        <name>[4Fe-4S] cluster</name>
        <dbReference type="ChEBI" id="CHEBI:49883"/>
    </ligand>
</feature>
<feature type="binding site" evidence="1">
    <location>
        <position position="114"/>
    </location>
    <ligand>
        <name>[4Fe-4S] cluster</name>
        <dbReference type="ChEBI" id="CHEBI:49883"/>
    </ligand>
</feature>
<feature type="binding site" evidence="1">
    <location>
        <position position="145"/>
    </location>
    <ligand>
        <name>[4Fe-4S] cluster</name>
        <dbReference type="ChEBI" id="CHEBI:49883"/>
    </ligand>
</feature>
<sequence>MQDQQIINPISQSQIPQELSENVILSSVSDLYDWARLSSLWPLMYGTACCFIEIAAMIGSRFDFDRFGLVPRSSPRQADLIITAGTVTMKMAPALVRLYEQMPDPKYVIAMGACTITGGMFSSDSTTAVRGVDKLIPVDVYLPGCPPRPEAVMDAIVKLRKKIANEDVRERGNLMQTHRYYSTTHQMKVVPPIHTGVYLEAAARKSPAAALGAGVGEDMTPALVAEAEKEEA</sequence>
<name>NDHK1_ACAM1</name>
<reference key="1">
    <citation type="journal article" date="2008" name="Proc. Natl. Acad. Sci. U.S.A.">
        <title>Niche adaptation and genome expansion in the chlorophyll d-producing cyanobacterium Acaryochloris marina.</title>
        <authorList>
            <person name="Swingley W.D."/>
            <person name="Chen M."/>
            <person name="Cheung P.C."/>
            <person name="Conrad A.L."/>
            <person name="Dejesa L.C."/>
            <person name="Hao J."/>
            <person name="Honchak B.M."/>
            <person name="Karbach L.E."/>
            <person name="Kurdoglu A."/>
            <person name="Lahiri S."/>
            <person name="Mastrian S.D."/>
            <person name="Miyashita H."/>
            <person name="Page L."/>
            <person name="Ramakrishna P."/>
            <person name="Satoh S."/>
            <person name="Sattley W.M."/>
            <person name="Shimada Y."/>
            <person name="Taylor H.L."/>
            <person name="Tomo T."/>
            <person name="Tsuchiya T."/>
            <person name="Wang Z.T."/>
            <person name="Raymond J."/>
            <person name="Mimuro M."/>
            <person name="Blankenship R.E."/>
            <person name="Touchman J.W."/>
        </authorList>
    </citation>
    <scope>NUCLEOTIDE SEQUENCE [LARGE SCALE GENOMIC DNA]</scope>
    <source>
        <strain>MBIC 11017</strain>
    </source>
</reference>
<proteinExistence type="inferred from homology"/>
<comment type="function">
    <text evidence="1">NDH-1 shuttles electrons from an unknown electron donor, via FMN and iron-sulfur (Fe-S) centers, to quinones in the respiratory and/or the photosynthetic chain. The immediate electron acceptor for the enzyme in this species is believed to be plastoquinone. Couples the redox reaction to proton translocation, and thus conserves the redox energy in a proton gradient. Cyanobacterial NDH-1 also plays a role in inorganic carbon-concentration.</text>
</comment>
<comment type="catalytic activity">
    <reaction evidence="1">
        <text>a plastoquinone + NADH + (n+1) H(+)(in) = a plastoquinol + NAD(+) + n H(+)(out)</text>
        <dbReference type="Rhea" id="RHEA:42608"/>
        <dbReference type="Rhea" id="RHEA-COMP:9561"/>
        <dbReference type="Rhea" id="RHEA-COMP:9562"/>
        <dbReference type="ChEBI" id="CHEBI:15378"/>
        <dbReference type="ChEBI" id="CHEBI:17757"/>
        <dbReference type="ChEBI" id="CHEBI:57540"/>
        <dbReference type="ChEBI" id="CHEBI:57945"/>
        <dbReference type="ChEBI" id="CHEBI:62192"/>
    </reaction>
</comment>
<comment type="catalytic activity">
    <reaction evidence="1">
        <text>a plastoquinone + NADPH + (n+1) H(+)(in) = a plastoquinol + NADP(+) + n H(+)(out)</text>
        <dbReference type="Rhea" id="RHEA:42612"/>
        <dbReference type="Rhea" id="RHEA-COMP:9561"/>
        <dbReference type="Rhea" id="RHEA-COMP:9562"/>
        <dbReference type="ChEBI" id="CHEBI:15378"/>
        <dbReference type="ChEBI" id="CHEBI:17757"/>
        <dbReference type="ChEBI" id="CHEBI:57783"/>
        <dbReference type="ChEBI" id="CHEBI:58349"/>
        <dbReference type="ChEBI" id="CHEBI:62192"/>
    </reaction>
</comment>
<comment type="cofactor">
    <cofactor evidence="1">
        <name>[4Fe-4S] cluster</name>
        <dbReference type="ChEBI" id="CHEBI:49883"/>
    </cofactor>
    <text evidence="1">Binds 1 [4Fe-4S] cluster.</text>
</comment>
<comment type="subunit">
    <text evidence="1">NDH-1 can be composed of about 15 different subunits; different subcomplexes with different compositions have been identified which probably have different functions.</text>
</comment>
<comment type="subcellular location">
    <subcellularLocation>
        <location evidence="1">Cellular thylakoid membrane</location>
        <topology evidence="1">Peripheral membrane protein</topology>
        <orientation evidence="1">Cytoplasmic side</orientation>
    </subcellularLocation>
</comment>
<comment type="similarity">
    <text evidence="1">Belongs to the complex I 20 kDa subunit family.</text>
</comment>
<organism>
    <name type="scientific">Acaryochloris marina (strain MBIC 11017)</name>
    <dbReference type="NCBI Taxonomy" id="329726"/>
    <lineage>
        <taxon>Bacteria</taxon>
        <taxon>Bacillati</taxon>
        <taxon>Cyanobacteriota</taxon>
        <taxon>Cyanophyceae</taxon>
        <taxon>Acaryochloridales</taxon>
        <taxon>Acaryochloridaceae</taxon>
        <taxon>Acaryochloris</taxon>
    </lineage>
</organism>
<evidence type="ECO:0000255" key="1">
    <source>
        <dbReference type="HAMAP-Rule" id="MF_01356"/>
    </source>
</evidence>
<gene>
    <name evidence="1" type="primary">ndhK1</name>
    <name type="ordered locus">AM1_1371</name>
</gene>
<accession>B0C6I1</accession>